<name>PSAN_PEA</name>
<accession>P82339</accession>
<feature type="chain" id="PRO_0000234463" description="Photosystem I reaction center subunit N">
    <location>
        <begin position="1"/>
        <end position="14" status="greater than"/>
    </location>
</feature>
<feature type="non-terminal residue" evidence="4">
    <location>
        <position position="14"/>
    </location>
</feature>
<gene>
    <name type="primary">PSAN</name>
</gene>
<keyword id="KW-0150">Chloroplast</keyword>
<keyword id="KW-0903">Direct protein sequencing</keyword>
<keyword id="KW-0472">Membrane</keyword>
<keyword id="KW-0602">Photosynthesis</keyword>
<keyword id="KW-0603">Photosystem I</keyword>
<keyword id="KW-0934">Plastid</keyword>
<keyword id="KW-0793">Thylakoid</keyword>
<reference evidence="5" key="1">
    <citation type="journal article" date="2000" name="Plant Cell">
        <title>Proteomics of the chloroplast: systematic identification and targeting analysis of lumenal and peripheral thylakoid proteins.</title>
        <authorList>
            <person name="Peltier J.-B."/>
            <person name="Friso G."/>
            <person name="Kalume D.E."/>
            <person name="Roepstorff P."/>
            <person name="Nilsson F."/>
            <person name="Adamska I."/>
            <person name="van Wijk K.J."/>
        </authorList>
    </citation>
    <scope>PROTEIN SEQUENCE</scope>
    <scope>SUBCELLULAR LOCATION</scope>
    <source>
        <strain evidence="3">cv. De Grace</strain>
        <tissue evidence="3">Leaf</tissue>
    </source>
</reference>
<organism>
    <name type="scientific">Pisum sativum</name>
    <name type="common">Garden pea</name>
    <name type="synonym">Lathyrus oleraceus</name>
    <dbReference type="NCBI Taxonomy" id="3888"/>
    <lineage>
        <taxon>Eukaryota</taxon>
        <taxon>Viridiplantae</taxon>
        <taxon>Streptophyta</taxon>
        <taxon>Embryophyta</taxon>
        <taxon>Tracheophyta</taxon>
        <taxon>Spermatophyta</taxon>
        <taxon>Magnoliopsida</taxon>
        <taxon>eudicotyledons</taxon>
        <taxon>Gunneridae</taxon>
        <taxon>Pentapetalae</taxon>
        <taxon>rosids</taxon>
        <taxon>fabids</taxon>
        <taxon>Fabales</taxon>
        <taxon>Fabaceae</taxon>
        <taxon>Papilionoideae</taxon>
        <taxon>50 kb inversion clade</taxon>
        <taxon>NPAAA clade</taxon>
        <taxon>Hologalegina</taxon>
        <taxon>IRL clade</taxon>
        <taxon>Fabeae</taxon>
        <taxon>Pisum</taxon>
    </lineage>
</organism>
<dbReference type="GO" id="GO:0009535">
    <property type="term" value="C:chloroplast thylakoid membrane"/>
    <property type="evidence" value="ECO:0007669"/>
    <property type="project" value="UniProtKB-SubCell"/>
</dbReference>
<dbReference type="GO" id="GO:0009522">
    <property type="term" value="C:photosystem I"/>
    <property type="evidence" value="ECO:0007669"/>
    <property type="project" value="UniProtKB-KW"/>
</dbReference>
<dbReference type="GO" id="GO:0015979">
    <property type="term" value="P:photosynthesis"/>
    <property type="evidence" value="ECO:0007669"/>
    <property type="project" value="UniProtKB-KW"/>
</dbReference>
<dbReference type="Gene3D" id="1.20.5.740">
    <property type="entry name" value="Single helix bin"/>
    <property type="match status" value="1"/>
</dbReference>
<comment type="function">
    <text evidence="1">May function in mediating the binding of the antenna complexes to the PSI reaction center and core antenna.</text>
</comment>
<comment type="subcellular location">
    <subcellularLocation>
        <location evidence="3">Plastid</location>
        <location evidence="3">Chloroplast thylakoid membrane</location>
        <topology evidence="3">Peripheral membrane protein</topology>
        <orientation evidence="3">Lumenal side</orientation>
    </subcellularLocation>
</comment>
<comment type="similarity">
    <text evidence="2">Belongs to the psaN family.</text>
</comment>
<evidence type="ECO:0000250" key="1"/>
<evidence type="ECO:0000255" key="2"/>
<evidence type="ECO:0000269" key="3">
    <source>
    </source>
</evidence>
<evidence type="ECO:0000303" key="4">
    <source>
    </source>
</evidence>
<evidence type="ECO:0000305" key="5"/>
<protein>
    <recommendedName>
        <fullName>Photosystem I reaction center subunit N</fullName>
        <shortName>PSI-N</shortName>
    </recommendedName>
</protein>
<sequence>SVFDEYLEKSKANK</sequence>
<proteinExistence type="evidence at protein level"/>